<protein>
    <recommendedName>
        <fullName evidence="1">Large ribosomal subunit protein bL12</fullName>
    </recommendedName>
    <alternativeName>
        <fullName evidence="3">50S ribosomal protein L7/L12</fullName>
    </alternativeName>
</protein>
<comment type="function">
    <text evidence="1">Forms part of the ribosomal stalk which helps the ribosome interact with GTP-bound translation factors. Is thus essential for accurate translation.</text>
</comment>
<comment type="subunit">
    <text evidence="1">Homodimer. Part of the ribosomal stalk of the 50S ribosomal subunit. Forms a multimeric L10(L12)X complex, where L10 forms an elongated spine to which 2 to 4 L12 dimers bind in a sequential fashion. Binds GTP-bound translation factors.</text>
</comment>
<comment type="similarity">
    <text evidence="1">Belongs to the bacterial ribosomal protein bL12 family.</text>
</comment>
<keyword id="KW-1185">Reference proteome</keyword>
<keyword id="KW-0687">Ribonucleoprotein</keyword>
<keyword id="KW-0689">Ribosomal protein</keyword>
<sequence>MAKFTQDELLEAFGEMTLVELSDFVKAFEEKFDVEAAAPVAAVAAAAPGAAPAEEEKDEFTVVLSAVGDKKIQVIKAVRAITNLGLAEAKALVDGAPKPVLENAKKEDAEKAKAQLEEAGATVELK</sequence>
<evidence type="ECO:0000255" key="1">
    <source>
        <dbReference type="HAMAP-Rule" id="MF_00368"/>
    </source>
</evidence>
<evidence type="ECO:0000256" key="2">
    <source>
        <dbReference type="SAM" id="MobiDB-lite"/>
    </source>
</evidence>
<evidence type="ECO:0000305" key="3"/>
<feature type="chain" id="PRO_1000195771" description="Large ribosomal subunit protein bL12">
    <location>
        <begin position="1"/>
        <end position="126"/>
    </location>
</feature>
<feature type="region of interest" description="Disordered" evidence="2">
    <location>
        <begin position="104"/>
        <end position="126"/>
    </location>
</feature>
<feature type="compositionally biased region" description="Basic and acidic residues" evidence="2">
    <location>
        <begin position="104"/>
        <end position="116"/>
    </location>
</feature>
<feature type="compositionally biased region" description="Low complexity" evidence="2">
    <location>
        <begin position="117"/>
        <end position="126"/>
    </location>
</feature>
<reference key="1">
    <citation type="journal article" date="2009" name="J. Bacteriol.">
        <title>Genome sequence of the probiotic bacterium Bifidobacterium animalis subsp. lactis AD011.</title>
        <authorList>
            <person name="Kim J.F."/>
            <person name="Jeong H."/>
            <person name="Yu D.S."/>
            <person name="Choi S.-H."/>
            <person name="Hur C.-G."/>
            <person name="Park M.-S."/>
            <person name="Yoon S.H."/>
            <person name="Kim D.-W."/>
            <person name="Ji G.E."/>
            <person name="Park H.-S."/>
            <person name="Oh T.K."/>
        </authorList>
    </citation>
    <scope>NUCLEOTIDE SEQUENCE [LARGE SCALE GENOMIC DNA]</scope>
    <source>
        <strain>AD011</strain>
    </source>
</reference>
<organism>
    <name type="scientific">Bifidobacterium animalis subsp. lactis (strain AD011)</name>
    <dbReference type="NCBI Taxonomy" id="442563"/>
    <lineage>
        <taxon>Bacteria</taxon>
        <taxon>Bacillati</taxon>
        <taxon>Actinomycetota</taxon>
        <taxon>Actinomycetes</taxon>
        <taxon>Bifidobacteriales</taxon>
        <taxon>Bifidobacteriaceae</taxon>
        <taxon>Bifidobacterium</taxon>
    </lineage>
</organism>
<accession>B8DVY5</accession>
<proteinExistence type="inferred from homology"/>
<name>RL7_BIFA0</name>
<dbReference type="EMBL" id="CP001213">
    <property type="protein sequence ID" value="ACL28636.1"/>
    <property type="molecule type" value="Genomic_DNA"/>
</dbReference>
<dbReference type="RefSeq" id="WP_004268512.1">
    <property type="nucleotide sequence ID" value="NC_011835.1"/>
</dbReference>
<dbReference type="SMR" id="B8DVY5"/>
<dbReference type="STRING" id="442563.BLA_0334"/>
<dbReference type="GeneID" id="29695470"/>
<dbReference type="KEGG" id="bla:BLA_0334"/>
<dbReference type="HOGENOM" id="CLU_086499_3_0_11"/>
<dbReference type="Proteomes" id="UP000002456">
    <property type="component" value="Chromosome"/>
</dbReference>
<dbReference type="GO" id="GO:0022625">
    <property type="term" value="C:cytosolic large ribosomal subunit"/>
    <property type="evidence" value="ECO:0007669"/>
    <property type="project" value="TreeGrafter"/>
</dbReference>
<dbReference type="GO" id="GO:0003729">
    <property type="term" value="F:mRNA binding"/>
    <property type="evidence" value="ECO:0007669"/>
    <property type="project" value="TreeGrafter"/>
</dbReference>
<dbReference type="GO" id="GO:0003735">
    <property type="term" value="F:structural constituent of ribosome"/>
    <property type="evidence" value="ECO:0007669"/>
    <property type="project" value="InterPro"/>
</dbReference>
<dbReference type="GO" id="GO:0006412">
    <property type="term" value="P:translation"/>
    <property type="evidence" value="ECO:0007669"/>
    <property type="project" value="UniProtKB-UniRule"/>
</dbReference>
<dbReference type="CDD" id="cd00387">
    <property type="entry name" value="Ribosomal_L7_L12"/>
    <property type="match status" value="1"/>
</dbReference>
<dbReference type="FunFam" id="3.30.1390.10:FF:000001">
    <property type="entry name" value="50S ribosomal protein L7/L12"/>
    <property type="match status" value="1"/>
</dbReference>
<dbReference type="Gene3D" id="3.30.1390.10">
    <property type="match status" value="1"/>
</dbReference>
<dbReference type="Gene3D" id="1.20.5.710">
    <property type="entry name" value="Single helix bin"/>
    <property type="match status" value="1"/>
</dbReference>
<dbReference type="HAMAP" id="MF_00368">
    <property type="entry name" value="Ribosomal_bL12"/>
    <property type="match status" value="1"/>
</dbReference>
<dbReference type="InterPro" id="IPR000206">
    <property type="entry name" value="Ribosomal_bL12"/>
</dbReference>
<dbReference type="InterPro" id="IPR013823">
    <property type="entry name" value="Ribosomal_bL12_C"/>
</dbReference>
<dbReference type="InterPro" id="IPR014719">
    <property type="entry name" value="Ribosomal_bL12_C/ClpS-like"/>
</dbReference>
<dbReference type="InterPro" id="IPR008932">
    <property type="entry name" value="Ribosomal_bL12_oligo"/>
</dbReference>
<dbReference type="InterPro" id="IPR036235">
    <property type="entry name" value="Ribosomal_bL12_oligo_N_sf"/>
</dbReference>
<dbReference type="NCBIfam" id="TIGR00855">
    <property type="entry name" value="L12"/>
    <property type="match status" value="1"/>
</dbReference>
<dbReference type="PANTHER" id="PTHR45987">
    <property type="entry name" value="39S RIBOSOMAL PROTEIN L12"/>
    <property type="match status" value="1"/>
</dbReference>
<dbReference type="PANTHER" id="PTHR45987:SF4">
    <property type="entry name" value="LARGE RIBOSOMAL SUBUNIT PROTEIN BL12M"/>
    <property type="match status" value="1"/>
</dbReference>
<dbReference type="Pfam" id="PF00542">
    <property type="entry name" value="Ribosomal_L12"/>
    <property type="match status" value="1"/>
</dbReference>
<dbReference type="Pfam" id="PF16320">
    <property type="entry name" value="Ribosomal_L12_N"/>
    <property type="match status" value="1"/>
</dbReference>
<dbReference type="SUPFAM" id="SSF54736">
    <property type="entry name" value="ClpS-like"/>
    <property type="match status" value="1"/>
</dbReference>
<dbReference type="SUPFAM" id="SSF48300">
    <property type="entry name" value="Ribosomal protein L7/12, oligomerisation (N-terminal) domain"/>
    <property type="match status" value="1"/>
</dbReference>
<gene>
    <name evidence="1" type="primary">rplL</name>
    <name type="ordered locus">BLA_0334</name>
</gene>